<protein>
    <recommendedName>
        <fullName evidence="2">Molybdopterin synthase catalytic subunit</fullName>
        <ecNumber evidence="2">2.8.1.12</ecNumber>
    </recommendedName>
    <alternativeName>
        <fullName evidence="2">Molybdenum cofactor synthesis protein 2 large subunit</fullName>
    </alternativeName>
    <alternativeName>
        <fullName evidence="2">Molybdenum cofactor synthesis protein 2B</fullName>
        <shortName evidence="2">MOCS2B</shortName>
    </alternativeName>
</protein>
<gene>
    <name evidence="2" type="primary">Mocs2</name>
</gene>
<accession>Q9Z223</accession>
<accession>Q8C5E5</accession>
<accession>Q8R1M7</accession>
<accession>Q9DCK1</accession>
<evidence type="ECO:0000250" key="1">
    <source>
        <dbReference type="UniProtKB" id="O96007"/>
    </source>
</evidence>
<evidence type="ECO:0000255" key="2">
    <source>
        <dbReference type="HAMAP-Rule" id="MF_03052"/>
    </source>
</evidence>
<evidence type="ECO:0000256" key="3">
    <source>
        <dbReference type="SAM" id="MobiDB-lite"/>
    </source>
</evidence>
<evidence type="ECO:0000303" key="4">
    <source>
    </source>
</evidence>
<evidence type="ECO:0000305" key="5"/>
<comment type="function">
    <text evidence="2">Catalytic subunit of the molybdopterin synthase complex, a complex that catalyzes the conversion of precursor Z into molybdopterin. Acts by mediating the incorporation of 2 sulfur atoms from thiocarboxylated MOCS2A into precursor Z to generate a dithiolene group.</text>
</comment>
<comment type="catalytic activity">
    <reaction evidence="2">
        <text>2 [molybdopterin-synthase sulfur-carrier protein]-C-terminal-Gly-aminoethanethioate + cyclic pyranopterin phosphate + H2O = molybdopterin + 2 [molybdopterin-synthase sulfur-carrier protein]-C-terminal Gly-Gly + 2 H(+)</text>
        <dbReference type="Rhea" id="RHEA:26333"/>
        <dbReference type="Rhea" id="RHEA-COMP:12202"/>
        <dbReference type="Rhea" id="RHEA-COMP:19907"/>
        <dbReference type="ChEBI" id="CHEBI:15377"/>
        <dbReference type="ChEBI" id="CHEBI:15378"/>
        <dbReference type="ChEBI" id="CHEBI:58698"/>
        <dbReference type="ChEBI" id="CHEBI:59648"/>
        <dbReference type="ChEBI" id="CHEBI:90778"/>
        <dbReference type="ChEBI" id="CHEBI:232372"/>
        <dbReference type="EC" id="2.8.1.12"/>
    </reaction>
</comment>
<comment type="pathway">
    <text evidence="2">Cofactor biosynthesis; molybdopterin biosynthesis.</text>
</comment>
<comment type="subunit">
    <text evidence="2">Heterotetramer; composed of 2 small (MOCS2A) and 2 large (MOCS2B) subunits.</text>
</comment>
<comment type="subcellular location">
    <subcellularLocation>
        <location evidence="2">Cytoplasm</location>
        <location evidence="2">Cytosol</location>
    </subcellularLocation>
</comment>
<comment type="alternative products">
    <event type="alternative splicing"/>
    <isoform>
        <id>Q9Z223-2</id>
        <name>1</name>
        <sequence type="displayed"/>
    </isoform>
    <isoform>
        <id>Q9Z223-1</id>
        <name>2</name>
        <sequence type="described" ref="VSP_010081 VSP_010082"/>
    </isoform>
    <isoform>
        <id>Q9Z223-3</id>
        <name>3</name>
        <sequence type="described" ref="VSP_036808"/>
    </isoform>
</comment>
<comment type="miscellaneous">
    <text>This protein is produced by a bicistronic gene which also produces the small subunit (MOCS2A) from an overlapping reading frame.</text>
</comment>
<comment type="similarity">
    <text evidence="2">Belongs to the MoaE family. MOCS2B subfamily.</text>
</comment>
<name>MOC2B_MOUSE</name>
<dbReference type="EC" id="2.8.1.12" evidence="2"/>
<dbReference type="EMBL" id="AF091872">
    <property type="protein sequence ID" value="AAD14601.1"/>
    <property type="molecule type" value="mRNA"/>
</dbReference>
<dbReference type="EMBL" id="AK002719">
    <property type="protein sequence ID" value="BAB22306.1"/>
    <property type="molecule type" value="mRNA"/>
</dbReference>
<dbReference type="EMBL" id="AK010112">
    <property type="protein sequence ID" value="BAB26707.2"/>
    <property type="molecule type" value="mRNA"/>
</dbReference>
<dbReference type="EMBL" id="AK078782">
    <property type="protein sequence ID" value="BAC37393.1"/>
    <property type="molecule type" value="mRNA"/>
</dbReference>
<dbReference type="EMBL" id="CH466568">
    <property type="protein sequence ID" value="EDL18371.1"/>
    <property type="molecule type" value="Genomic_DNA"/>
</dbReference>
<dbReference type="EMBL" id="CH466568">
    <property type="protein sequence ID" value="EDL18372.1"/>
    <property type="molecule type" value="Genomic_DNA"/>
</dbReference>
<dbReference type="EMBL" id="BC024371">
    <property type="protein sequence ID" value="AAH24371.1"/>
    <property type="molecule type" value="mRNA"/>
</dbReference>
<dbReference type="CCDS" id="CCDS49371.1">
    <molecule id="Q9Z223-2"/>
</dbReference>
<dbReference type="RefSeq" id="NP_001106845.1">
    <property type="nucleotide sequence ID" value="NM_001113374.1"/>
</dbReference>
<dbReference type="RefSeq" id="NP_038854.2">
    <property type="nucleotide sequence ID" value="NM_013826.3"/>
</dbReference>
<dbReference type="SMR" id="Q9Z223"/>
<dbReference type="BioGRID" id="201463">
    <property type="interactions" value="1"/>
</dbReference>
<dbReference type="FunCoup" id="Q9Z223">
    <property type="interactions" value="612"/>
</dbReference>
<dbReference type="MINT" id="Q9Z223"/>
<dbReference type="STRING" id="10090.ENSMUSP00000125797"/>
<dbReference type="iPTMnet" id="Q9Z223"/>
<dbReference type="PhosphoSitePlus" id="Q9Z223"/>
<dbReference type="PaxDb" id="10090-ENSMUSP00000125797"/>
<dbReference type="PeptideAtlas" id="Q9Z223"/>
<dbReference type="ProteomicsDB" id="252586">
    <molecule id="Q9Z223-2"/>
</dbReference>
<dbReference type="ProteomicsDB" id="252587">
    <molecule id="Q9Z223-1"/>
</dbReference>
<dbReference type="ProteomicsDB" id="252588">
    <molecule id="Q9Z223-3"/>
</dbReference>
<dbReference type="Pumba" id="Q9Z223"/>
<dbReference type="DNASU" id="17434"/>
<dbReference type="GeneID" id="17434"/>
<dbReference type="KEGG" id="mmu:17434"/>
<dbReference type="UCSC" id="uc007rxv.2">
    <molecule id="Q9Z223-2"/>
    <property type="organism name" value="mouse"/>
</dbReference>
<dbReference type="AGR" id="MGI:1336894"/>
<dbReference type="CTD" id="4338"/>
<dbReference type="MGI" id="MGI:1336894">
    <property type="gene designation" value="Mocs2"/>
</dbReference>
<dbReference type="eggNOG" id="KOG3307">
    <property type="taxonomic scope" value="Eukaryota"/>
</dbReference>
<dbReference type="InParanoid" id="Q9Z223"/>
<dbReference type="OrthoDB" id="5531344at2759"/>
<dbReference type="TreeFam" id="TF314334"/>
<dbReference type="UniPathway" id="UPA00344"/>
<dbReference type="BioGRID-ORCS" id="17434">
    <property type="hits" value="3 hits in 74 CRISPR screens"/>
</dbReference>
<dbReference type="ChiTaRS" id="Mocs2">
    <property type="organism name" value="mouse"/>
</dbReference>
<dbReference type="Proteomes" id="UP000000589">
    <property type="component" value="Unplaced"/>
</dbReference>
<dbReference type="RNAct" id="Q9Z223">
    <property type="molecule type" value="protein"/>
</dbReference>
<dbReference type="GO" id="GO:0005829">
    <property type="term" value="C:cytosol"/>
    <property type="evidence" value="ECO:0000250"/>
    <property type="project" value="UniProtKB"/>
</dbReference>
<dbReference type="GO" id="GO:1990140">
    <property type="term" value="C:molybdopterin synthase complex"/>
    <property type="evidence" value="ECO:0000250"/>
    <property type="project" value="UniProtKB"/>
</dbReference>
<dbReference type="GO" id="GO:0042802">
    <property type="term" value="F:identical protein binding"/>
    <property type="evidence" value="ECO:0000353"/>
    <property type="project" value="MGI"/>
</dbReference>
<dbReference type="GO" id="GO:0030366">
    <property type="term" value="F:molybdopterin synthase activity"/>
    <property type="evidence" value="ECO:0000266"/>
    <property type="project" value="MGI"/>
</dbReference>
<dbReference type="GO" id="GO:0006777">
    <property type="term" value="P:Mo-molybdopterin cofactor biosynthetic process"/>
    <property type="evidence" value="ECO:0000250"/>
    <property type="project" value="UniProtKB"/>
</dbReference>
<dbReference type="GO" id="GO:0032324">
    <property type="term" value="P:molybdopterin cofactor biosynthetic process"/>
    <property type="evidence" value="ECO:0000315"/>
    <property type="project" value="MGI"/>
</dbReference>
<dbReference type="CDD" id="cd00756">
    <property type="entry name" value="MoaE"/>
    <property type="match status" value="1"/>
</dbReference>
<dbReference type="FunFam" id="3.90.1170.40:FF:000002">
    <property type="entry name" value="Molybdopterin synthase catalytic subunit"/>
    <property type="match status" value="1"/>
</dbReference>
<dbReference type="Gene3D" id="3.90.1170.40">
    <property type="entry name" value="Molybdopterin biosynthesis MoaE subunit"/>
    <property type="match status" value="1"/>
</dbReference>
<dbReference type="HAMAP" id="MF_03052">
    <property type="entry name" value="MOC2B"/>
    <property type="match status" value="1"/>
</dbReference>
<dbReference type="InterPro" id="IPR036563">
    <property type="entry name" value="MoaE_sf"/>
</dbReference>
<dbReference type="InterPro" id="IPR028888">
    <property type="entry name" value="MOCS2B_euk"/>
</dbReference>
<dbReference type="InterPro" id="IPR003448">
    <property type="entry name" value="Mopterin_biosynth_MoaE"/>
</dbReference>
<dbReference type="PANTHER" id="PTHR23404">
    <property type="entry name" value="MOLYBDOPTERIN SYNTHASE RELATED"/>
    <property type="match status" value="1"/>
</dbReference>
<dbReference type="Pfam" id="PF02391">
    <property type="entry name" value="MoaE"/>
    <property type="match status" value="1"/>
</dbReference>
<dbReference type="SUPFAM" id="SSF54690">
    <property type="entry name" value="Molybdopterin synthase subunit MoaE"/>
    <property type="match status" value="1"/>
</dbReference>
<reference key="1">
    <citation type="journal article" date="1999" name="Am. J. Hum. Genet.">
        <title>Human molybdopterin synthase gene: identification of a bicistronic transcript with overlapping reading frames.</title>
        <authorList>
            <person name="Stallmeyer B."/>
            <person name="Drugeon G."/>
            <person name="Reiss J."/>
            <person name="Haenni A.L."/>
            <person name="Mendel R.R."/>
        </authorList>
    </citation>
    <scope>NUCLEOTIDE SEQUENCE [MRNA] (ISOFORM 2)</scope>
</reference>
<reference key="2">
    <citation type="journal article" date="2005" name="Science">
        <title>The transcriptional landscape of the mammalian genome.</title>
        <authorList>
            <person name="Carninci P."/>
            <person name="Kasukawa T."/>
            <person name="Katayama S."/>
            <person name="Gough J."/>
            <person name="Frith M.C."/>
            <person name="Maeda N."/>
            <person name="Oyama R."/>
            <person name="Ravasi T."/>
            <person name="Lenhard B."/>
            <person name="Wells C."/>
            <person name="Kodzius R."/>
            <person name="Shimokawa K."/>
            <person name="Bajic V.B."/>
            <person name="Brenner S.E."/>
            <person name="Batalov S."/>
            <person name="Forrest A.R."/>
            <person name="Zavolan M."/>
            <person name="Davis M.J."/>
            <person name="Wilming L.G."/>
            <person name="Aidinis V."/>
            <person name="Allen J.E."/>
            <person name="Ambesi-Impiombato A."/>
            <person name="Apweiler R."/>
            <person name="Aturaliya R.N."/>
            <person name="Bailey T.L."/>
            <person name="Bansal M."/>
            <person name="Baxter L."/>
            <person name="Beisel K.W."/>
            <person name="Bersano T."/>
            <person name="Bono H."/>
            <person name="Chalk A.M."/>
            <person name="Chiu K.P."/>
            <person name="Choudhary V."/>
            <person name="Christoffels A."/>
            <person name="Clutterbuck D.R."/>
            <person name="Crowe M.L."/>
            <person name="Dalla E."/>
            <person name="Dalrymple B.P."/>
            <person name="de Bono B."/>
            <person name="Della Gatta G."/>
            <person name="di Bernardo D."/>
            <person name="Down T."/>
            <person name="Engstrom P."/>
            <person name="Fagiolini M."/>
            <person name="Faulkner G."/>
            <person name="Fletcher C.F."/>
            <person name="Fukushima T."/>
            <person name="Furuno M."/>
            <person name="Futaki S."/>
            <person name="Gariboldi M."/>
            <person name="Georgii-Hemming P."/>
            <person name="Gingeras T.R."/>
            <person name="Gojobori T."/>
            <person name="Green R.E."/>
            <person name="Gustincich S."/>
            <person name="Harbers M."/>
            <person name="Hayashi Y."/>
            <person name="Hensch T.K."/>
            <person name="Hirokawa N."/>
            <person name="Hill D."/>
            <person name="Huminiecki L."/>
            <person name="Iacono M."/>
            <person name="Ikeo K."/>
            <person name="Iwama A."/>
            <person name="Ishikawa T."/>
            <person name="Jakt M."/>
            <person name="Kanapin A."/>
            <person name="Katoh M."/>
            <person name="Kawasawa Y."/>
            <person name="Kelso J."/>
            <person name="Kitamura H."/>
            <person name="Kitano H."/>
            <person name="Kollias G."/>
            <person name="Krishnan S.P."/>
            <person name="Kruger A."/>
            <person name="Kummerfeld S.K."/>
            <person name="Kurochkin I.V."/>
            <person name="Lareau L.F."/>
            <person name="Lazarevic D."/>
            <person name="Lipovich L."/>
            <person name="Liu J."/>
            <person name="Liuni S."/>
            <person name="McWilliam S."/>
            <person name="Madan Babu M."/>
            <person name="Madera M."/>
            <person name="Marchionni L."/>
            <person name="Matsuda H."/>
            <person name="Matsuzawa S."/>
            <person name="Miki H."/>
            <person name="Mignone F."/>
            <person name="Miyake S."/>
            <person name="Morris K."/>
            <person name="Mottagui-Tabar S."/>
            <person name="Mulder N."/>
            <person name="Nakano N."/>
            <person name="Nakauchi H."/>
            <person name="Ng P."/>
            <person name="Nilsson R."/>
            <person name="Nishiguchi S."/>
            <person name="Nishikawa S."/>
            <person name="Nori F."/>
            <person name="Ohara O."/>
            <person name="Okazaki Y."/>
            <person name="Orlando V."/>
            <person name="Pang K.C."/>
            <person name="Pavan W.J."/>
            <person name="Pavesi G."/>
            <person name="Pesole G."/>
            <person name="Petrovsky N."/>
            <person name="Piazza S."/>
            <person name="Reed J."/>
            <person name="Reid J.F."/>
            <person name="Ring B.Z."/>
            <person name="Ringwald M."/>
            <person name="Rost B."/>
            <person name="Ruan Y."/>
            <person name="Salzberg S.L."/>
            <person name="Sandelin A."/>
            <person name="Schneider C."/>
            <person name="Schoenbach C."/>
            <person name="Sekiguchi K."/>
            <person name="Semple C.A."/>
            <person name="Seno S."/>
            <person name="Sessa L."/>
            <person name="Sheng Y."/>
            <person name="Shibata Y."/>
            <person name="Shimada H."/>
            <person name="Shimada K."/>
            <person name="Silva D."/>
            <person name="Sinclair B."/>
            <person name="Sperling S."/>
            <person name="Stupka E."/>
            <person name="Sugiura K."/>
            <person name="Sultana R."/>
            <person name="Takenaka Y."/>
            <person name="Taki K."/>
            <person name="Tammoja K."/>
            <person name="Tan S.L."/>
            <person name="Tang S."/>
            <person name="Taylor M.S."/>
            <person name="Tegner J."/>
            <person name="Teichmann S.A."/>
            <person name="Ueda H.R."/>
            <person name="van Nimwegen E."/>
            <person name="Verardo R."/>
            <person name="Wei C.L."/>
            <person name="Yagi K."/>
            <person name="Yamanishi H."/>
            <person name="Zabarovsky E."/>
            <person name="Zhu S."/>
            <person name="Zimmer A."/>
            <person name="Hide W."/>
            <person name="Bult C."/>
            <person name="Grimmond S.M."/>
            <person name="Teasdale R.D."/>
            <person name="Liu E.T."/>
            <person name="Brusic V."/>
            <person name="Quackenbush J."/>
            <person name="Wahlestedt C."/>
            <person name="Mattick J.S."/>
            <person name="Hume D.A."/>
            <person name="Kai C."/>
            <person name="Sasaki D."/>
            <person name="Tomaru Y."/>
            <person name="Fukuda S."/>
            <person name="Kanamori-Katayama M."/>
            <person name="Suzuki M."/>
            <person name="Aoki J."/>
            <person name="Arakawa T."/>
            <person name="Iida J."/>
            <person name="Imamura K."/>
            <person name="Itoh M."/>
            <person name="Kato T."/>
            <person name="Kawaji H."/>
            <person name="Kawagashira N."/>
            <person name="Kawashima T."/>
            <person name="Kojima M."/>
            <person name="Kondo S."/>
            <person name="Konno H."/>
            <person name="Nakano K."/>
            <person name="Ninomiya N."/>
            <person name="Nishio T."/>
            <person name="Okada M."/>
            <person name="Plessy C."/>
            <person name="Shibata K."/>
            <person name="Shiraki T."/>
            <person name="Suzuki S."/>
            <person name="Tagami M."/>
            <person name="Waki K."/>
            <person name="Watahiki A."/>
            <person name="Okamura-Oho Y."/>
            <person name="Suzuki H."/>
            <person name="Kawai J."/>
            <person name="Hayashizaki Y."/>
        </authorList>
    </citation>
    <scope>NUCLEOTIDE SEQUENCE [LARGE SCALE MRNA] (ISOFORM 1)</scope>
    <source>
        <strain>C57BL/6J</strain>
        <tissue>Kidney</tissue>
        <tissue>Testis</tissue>
        <tissue>Tongue</tissue>
    </source>
</reference>
<reference key="3">
    <citation type="submission" date="2005-09" db="EMBL/GenBank/DDBJ databases">
        <authorList>
            <person name="Mural R.J."/>
            <person name="Adams M.D."/>
            <person name="Myers E.W."/>
            <person name="Smith H.O."/>
            <person name="Venter J.C."/>
        </authorList>
    </citation>
    <scope>NUCLEOTIDE SEQUENCE [LARGE SCALE GENOMIC DNA]</scope>
</reference>
<reference key="4">
    <citation type="journal article" date="2004" name="Genome Res.">
        <title>The status, quality, and expansion of the NIH full-length cDNA project: the Mammalian Gene Collection (MGC).</title>
        <authorList>
            <consortium name="The MGC Project Team"/>
        </authorList>
    </citation>
    <scope>NUCLEOTIDE SEQUENCE [LARGE SCALE MRNA] (ISOFORM 1)</scope>
    <source>
        <strain>FVB/N</strain>
        <tissue>Colon</tissue>
    </source>
</reference>
<reference key="5">
    <citation type="journal article" date="2010" name="Cell">
        <title>A tissue-specific atlas of mouse protein phosphorylation and expression.</title>
        <authorList>
            <person name="Huttlin E.L."/>
            <person name="Jedrychowski M.P."/>
            <person name="Elias J.E."/>
            <person name="Goswami T."/>
            <person name="Rad R."/>
            <person name="Beausoleil S.A."/>
            <person name="Villen J."/>
            <person name="Haas W."/>
            <person name="Sowa M.E."/>
            <person name="Gygi S.P."/>
        </authorList>
    </citation>
    <scope>IDENTIFICATION BY MASS SPECTROMETRY [LARGE SCALE ANALYSIS]</scope>
    <source>
        <tissue>Brain</tissue>
        <tissue>Liver</tissue>
    </source>
</reference>
<keyword id="KW-0025">Alternative splicing</keyword>
<keyword id="KW-0963">Cytoplasm</keyword>
<keyword id="KW-0501">Molybdenum cofactor biosynthesis</keyword>
<keyword id="KW-0597">Phosphoprotein</keyword>
<keyword id="KW-1185">Reference proteome</keyword>
<keyword id="KW-0808">Transferase</keyword>
<organism>
    <name type="scientific">Mus musculus</name>
    <name type="common">Mouse</name>
    <dbReference type="NCBI Taxonomy" id="10090"/>
    <lineage>
        <taxon>Eukaryota</taxon>
        <taxon>Metazoa</taxon>
        <taxon>Chordata</taxon>
        <taxon>Craniata</taxon>
        <taxon>Vertebrata</taxon>
        <taxon>Euteleostomi</taxon>
        <taxon>Mammalia</taxon>
        <taxon>Eutheria</taxon>
        <taxon>Euarchontoglires</taxon>
        <taxon>Glires</taxon>
        <taxon>Rodentia</taxon>
        <taxon>Myomorpha</taxon>
        <taxon>Muroidea</taxon>
        <taxon>Muridae</taxon>
        <taxon>Murinae</taxon>
        <taxon>Mus</taxon>
        <taxon>Mus</taxon>
    </lineage>
</organism>
<sequence length="189" mass="20924">MSSLEISNSCFSPETRSPSSRQSVEDNASEPSGKDVDDVQEKPKDIIQFTAEKLSVGEVSQLVVSPLCGAVSLFVGTTRNNFEGKKVISLEYEAYVPMAENEIRKICNDIRQKWPVRHIAVFHRLGLVPVSEASTVIAVSSAHRAASLEAVSYAIDSLKAKVPIWKKEIYEESTSSWKRNKECFWAAGD</sequence>
<proteinExistence type="evidence at protein level"/>
<feature type="chain" id="PRO_0000163112" description="Molybdopterin synthase catalytic subunit">
    <location>
        <begin position="1"/>
        <end position="189"/>
    </location>
</feature>
<feature type="region of interest" description="Disordered" evidence="3">
    <location>
        <begin position="1"/>
        <end position="41"/>
    </location>
</feature>
<feature type="compositionally biased region" description="Polar residues" evidence="3">
    <location>
        <begin position="1"/>
        <end position="30"/>
    </location>
</feature>
<feature type="compositionally biased region" description="Basic and acidic residues" evidence="3">
    <location>
        <begin position="32"/>
        <end position="41"/>
    </location>
</feature>
<feature type="binding site" evidence="2">
    <location>
        <begin position="143"/>
        <end position="144"/>
    </location>
    <ligand>
        <name>substrate</name>
    </ligand>
</feature>
<feature type="binding site" evidence="2">
    <location>
        <position position="159"/>
    </location>
    <ligand>
        <name>substrate</name>
    </ligand>
</feature>
<feature type="binding site" evidence="2">
    <location>
        <begin position="166"/>
        <end position="168"/>
    </location>
    <ligand>
        <name>substrate</name>
    </ligand>
</feature>
<feature type="modified residue" description="Phosphoserine" evidence="1">
    <location>
        <position position="20"/>
    </location>
</feature>
<feature type="splice variant" id="VSP_036808" description="In isoform 3." evidence="5">
    <location>
        <begin position="127"/>
        <end position="189"/>
    </location>
</feature>
<feature type="splice variant" id="VSP_010081" description="In isoform 2." evidence="4">
    <original>EIY</original>
    <variation>GLT</variation>
    <location>
        <begin position="168"/>
        <end position="170"/>
    </location>
</feature>
<feature type="splice variant" id="VSP_010082" description="In isoform 2." evidence="4">
    <location>
        <begin position="171"/>
        <end position="189"/>
    </location>
</feature>
<feature type="sequence conflict" description="In Ref. 1; AAD14601 and 2; BAB22306/BAB26707/BAC37393." evidence="5" ref="1 2">
    <original>T</original>
    <variation>M</variation>
    <location>
        <position position="15"/>
    </location>
</feature>
<feature type="sequence conflict" description="In Ref. 1; AAD14601 and 2; BAB22306/BAB26707/BAC37393." evidence="5" ref="1 2">
    <original>S</original>
    <variation>L</variation>
    <location>
        <position position="17"/>
    </location>
</feature>